<comment type="function">
    <text evidence="1">Essential cell division protein that coordinates cell division and chromosome segregation. The N-terminus is involved in assembly of the cell-division machinery. The C-terminus functions as a DNA motor that moves dsDNA in an ATP-dependent manner towards the dif recombination site, which is located within the replication terminus region. Required for activation of the Xer recombinase, allowing activation of chromosome unlinking by recombination (By similarity).</text>
</comment>
<comment type="subunit">
    <text evidence="1">Homohexamer. Forms a ring that surrounds DNA (By similarity).</text>
</comment>
<comment type="subcellular location">
    <subcellularLocation>
        <location evidence="1">Cell inner membrane</location>
        <topology evidence="1">Multi-pass membrane protein</topology>
    </subcellularLocation>
    <text evidence="1">Located at the septum.</text>
</comment>
<comment type="domain">
    <text evidence="1">Consists of an N-terminal domain, which is sufficient for the localization to the septal ring and is required for cell division, followed by a linker domain, and a C-terminal domain, which forms the translocation motor involved in chromosome segregation. The C-terminal domain can be further subdivided into alpha, beta and gamma subdomains. The alpha and beta subdomains form the DNA pump, and the gamma subdomain is a regulatory subdomain (By similarity).</text>
</comment>
<comment type="similarity">
    <text evidence="4">Belongs to the FtsK/SpoIIIE/SftA family.</text>
</comment>
<proteinExistence type="inferred from homology"/>
<reference key="1">
    <citation type="journal article" date="1997" name="Nature">
        <title>Genomic sequence of a Lyme disease spirochaete, Borrelia burgdorferi.</title>
        <authorList>
            <person name="Fraser C.M."/>
            <person name="Casjens S."/>
            <person name="Huang W.M."/>
            <person name="Sutton G.G."/>
            <person name="Clayton R.A."/>
            <person name="Lathigra R."/>
            <person name="White O."/>
            <person name="Ketchum K.A."/>
            <person name="Dodson R.J."/>
            <person name="Hickey E.K."/>
            <person name="Gwinn M.L."/>
            <person name="Dougherty B.A."/>
            <person name="Tomb J.-F."/>
            <person name="Fleischmann R.D."/>
            <person name="Richardson D.L."/>
            <person name="Peterson J.D."/>
            <person name="Kerlavage A.R."/>
            <person name="Quackenbush J."/>
            <person name="Salzberg S.L."/>
            <person name="Hanson M."/>
            <person name="van Vugt R."/>
            <person name="Palmer N."/>
            <person name="Adams M.D."/>
            <person name="Gocayne J.D."/>
            <person name="Weidman J.F."/>
            <person name="Utterback T.R."/>
            <person name="Watthey L."/>
            <person name="McDonald L.A."/>
            <person name="Artiach P."/>
            <person name="Bowman C."/>
            <person name="Garland S.A."/>
            <person name="Fujii C."/>
            <person name="Cotton M.D."/>
            <person name="Horst K."/>
            <person name="Roberts K.M."/>
            <person name="Hatch B."/>
            <person name="Smith H.O."/>
            <person name="Venter J.C."/>
        </authorList>
    </citation>
    <scope>NUCLEOTIDE SEQUENCE [LARGE SCALE GENOMIC DNA]</scope>
    <source>
        <strain>ATCC 35210 / DSM 4680 / CIP 102532 / B31</strain>
    </source>
</reference>
<sequence>MKDFYQYFQFLFFFMLSVISFSLFVALTPLSNVFVFFVFNLLGQILLNVFSFLSFYLIVYPIVNWYAYKKHIFTKRFIFNWNYTVILFFTLIFLIKINSNVEKSYFIKIFLINFGIVLGNFFIFTLLILEFVVWIYLNYVFFKDVNFILDTFKFLEFKIKILFENILSYFPFSNSLDVKKDIKVYGDSVDDLKDSQVFDEKKNIINDEEYQALWSFSAFLRNNKKPSNINLDKTIFEGSDLKEASSLNKDILNENALNLDENVDEIDESCEYKYLDNLEDNKLVISGKVKACEIRTKGIISQVAISHVYNENVALNKKNDSYVIDISVFDQKEIKNDVEDIEYDKEIQKQSMILQETLKEFNINAKLIDIIKGPVVTMYAVRPDKGIKLSKITSISDNIALRLAAIRVRIIAPIPGREAVGIEIPNKRREFILISEIIDSKEFRGDFRIPFALGKEISGENIVFDLVNSPHLLIAGATGAGKSVCVNSLIASIIFSKSPDEVKLIMIDPKIVELKLFNDIPHLLTPVITDVKRALEALRWCLDEMERRYVLLDNLLVRDISSYNKKIKDENLNLMILPYLVIIIDEFADLILSARKDLENLISRLAAMARAVGIHLVLATQRPSVDVITGVIKANFPSRISFMVASSMDSRIILGSSGAEKLLGKGDMLYISSLNPFPXRIQGGFLKEREVYRLVEEVKKFGSPNYIDDEIFIDSVKEPDLVALGPSDEPMFDEALEIVKTTRKASASYLQRRLKIGYNRAARIIEIMEDMGYVGPVNGSKPREVLI</sequence>
<organism>
    <name type="scientific">Borreliella burgdorferi (strain ATCC 35210 / DSM 4680 / CIP 102532 / B31)</name>
    <name type="common">Borrelia burgdorferi</name>
    <dbReference type="NCBI Taxonomy" id="224326"/>
    <lineage>
        <taxon>Bacteria</taxon>
        <taxon>Pseudomonadati</taxon>
        <taxon>Spirochaetota</taxon>
        <taxon>Spirochaetia</taxon>
        <taxon>Spirochaetales</taxon>
        <taxon>Borreliaceae</taxon>
        <taxon>Borreliella</taxon>
    </lineage>
</organism>
<accession>O51272</accession>
<name>FTSK_BORBU</name>
<protein>
    <recommendedName>
        <fullName>DNA translocase FtsK</fullName>
    </recommendedName>
</protein>
<gene>
    <name type="primary">ftsK</name>
    <name type="ordered locus">BB_0257</name>
</gene>
<feature type="chain" id="PRO_0000098241" description="DNA translocase FtsK">
    <location>
        <begin position="1"/>
        <end position="787"/>
    </location>
</feature>
<feature type="transmembrane region" description="Helical" evidence="2">
    <location>
        <begin position="10"/>
        <end position="30"/>
    </location>
</feature>
<feature type="transmembrane region" description="Helical" evidence="2">
    <location>
        <begin position="33"/>
        <end position="53"/>
    </location>
</feature>
<feature type="transmembrane region" description="Helical" evidence="2">
    <location>
        <begin position="77"/>
        <end position="97"/>
    </location>
</feature>
<feature type="transmembrane region" description="Helical" evidence="2">
    <location>
        <begin position="109"/>
        <end position="129"/>
    </location>
</feature>
<feature type="topological domain" description="Cytoplasmic" evidence="2">
    <location>
        <begin position="130"/>
        <end position="787"/>
    </location>
</feature>
<feature type="domain" description="FtsK" evidence="3">
    <location>
        <begin position="459"/>
        <end position="651"/>
    </location>
</feature>
<feature type="binding site" evidence="3">
    <location>
        <begin position="479"/>
        <end position="484"/>
    </location>
    <ligand>
        <name>ATP</name>
        <dbReference type="ChEBI" id="CHEBI:30616"/>
    </ligand>
</feature>
<keyword id="KW-0067">ATP-binding</keyword>
<keyword id="KW-0131">Cell cycle</keyword>
<keyword id="KW-0132">Cell division</keyword>
<keyword id="KW-0997">Cell inner membrane</keyword>
<keyword id="KW-1003">Cell membrane</keyword>
<keyword id="KW-0159">Chromosome partition</keyword>
<keyword id="KW-0238">DNA-binding</keyword>
<keyword id="KW-0472">Membrane</keyword>
<keyword id="KW-0547">Nucleotide-binding</keyword>
<keyword id="KW-1185">Reference proteome</keyword>
<keyword id="KW-0812">Transmembrane</keyword>
<keyword id="KW-1133">Transmembrane helix</keyword>
<dbReference type="EMBL" id="AE000783">
    <property type="status" value="NOT_ANNOTATED_CDS"/>
    <property type="molecule type" value="Genomic_DNA"/>
</dbReference>
<dbReference type="PIR" id="A70132">
    <property type="entry name" value="A70132"/>
</dbReference>
<dbReference type="RefSeq" id="WP_023591458.1">
    <property type="nucleotide sequence ID" value="NC_001318.1"/>
</dbReference>
<dbReference type="RefSeq" id="YP_008853940.1">
    <property type="nucleotide sequence ID" value="NC_001318.1"/>
</dbReference>
<dbReference type="PATRIC" id="fig|224326.49.peg.656"/>
<dbReference type="OrthoDB" id="9807790at2"/>
<dbReference type="Proteomes" id="UP000001807">
    <property type="component" value="Chromosome"/>
</dbReference>
<dbReference type="GO" id="GO:0005886">
    <property type="term" value="C:plasma membrane"/>
    <property type="evidence" value="ECO:0007669"/>
    <property type="project" value="UniProtKB-SubCell"/>
</dbReference>
<dbReference type="GO" id="GO:0005524">
    <property type="term" value="F:ATP binding"/>
    <property type="evidence" value="ECO:0007669"/>
    <property type="project" value="UniProtKB-KW"/>
</dbReference>
<dbReference type="GO" id="GO:0003677">
    <property type="term" value="F:DNA binding"/>
    <property type="evidence" value="ECO:0007669"/>
    <property type="project" value="UniProtKB-KW"/>
</dbReference>
<dbReference type="GO" id="GO:0051301">
    <property type="term" value="P:cell division"/>
    <property type="evidence" value="ECO:0007669"/>
    <property type="project" value="UniProtKB-KW"/>
</dbReference>
<dbReference type="GO" id="GO:0007059">
    <property type="term" value="P:chromosome segregation"/>
    <property type="evidence" value="ECO:0007669"/>
    <property type="project" value="UniProtKB-KW"/>
</dbReference>
<dbReference type="CDD" id="cd01127">
    <property type="entry name" value="TrwB_TraG_TraD_VirD4"/>
    <property type="match status" value="1"/>
</dbReference>
<dbReference type="Gene3D" id="3.30.980.40">
    <property type="match status" value="1"/>
</dbReference>
<dbReference type="Gene3D" id="3.40.50.300">
    <property type="entry name" value="P-loop containing nucleotide triphosphate hydrolases"/>
    <property type="match status" value="1"/>
</dbReference>
<dbReference type="Gene3D" id="1.10.10.10">
    <property type="entry name" value="Winged helix-like DNA-binding domain superfamily/Winged helix DNA-binding domain"/>
    <property type="match status" value="1"/>
</dbReference>
<dbReference type="InterPro" id="IPR050206">
    <property type="entry name" value="FtsK/SpoIIIE/SftA"/>
</dbReference>
<dbReference type="InterPro" id="IPR041027">
    <property type="entry name" value="FtsK_alpha"/>
</dbReference>
<dbReference type="InterPro" id="IPR002543">
    <property type="entry name" value="FtsK_dom"/>
</dbReference>
<dbReference type="InterPro" id="IPR018541">
    <property type="entry name" value="Ftsk_gamma"/>
</dbReference>
<dbReference type="InterPro" id="IPR027417">
    <property type="entry name" value="P-loop_NTPase"/>
</dbReference>
<dbReference type="InterPro" id="IPR036388">
    <property type="entry name" value="WH-like_DNA-bd_sf"/>
</dbReference>
<dbReference type="InterPro" id="IPR036390">
    <property type="entry name" value="WH_DNA-bd_sf"/>
</dbReference>
<dbReference type="PANTHER" id="PTHR22683:SF41">
    <property type="entry name" value="DNA TRANSLOCASE FTSK"/>
    <property type="match status" value="1"/>
</dbReference>
<dbReference type="PANTHER" id="PTHR22683">
    <property type="entry name" value="SPORULATION PROTEIN RELATED"/>
    <property type="match status" value="1"/>
</dbReference>
<dbReference type="Pfam" id="PF17854">
    <property type="entry name" value="FtsK_alpha"/>
    <property type="match status" value="1"/>
</dbReference>
<dbReference type="Pfam" id="PF09397">
    <property type="entry name" value="FtsK_gamma"/>
    <property type="match status" value="1"/>
</dbReference>
<dbReference type="Pfam" id="PF01580">
    <property type="entry name" value="FtsK_SpoIIIE"/>
    <property type="match status" value="1"/>
</dbReference>
<dbReference type="SMART" id="SM00843">
    <property type="entry name" value="Ftsk_gamma"/>
    <property type="match status" value="1"/>
</dbReference>
<dbReference type="SUPFAM" id="SSF52540">
    <property type="entry name" value="P-loop containing nucleoside triphosphate hydrolases"/>
    <property type="match status" value="1"/>
</dbReference>
<dbReference type="SUPFAM" id="SSF46785">
    <property type="entry name" value="Winged helix' DNA-binding domain"/>
    <property type="match status" value="1"/>
</dbReference>
<dbReference type="PROSITE" id="PS50901">
    <property type="entry name" value="FTSK"/>
    <property type="match status" value="1"/>
</dbReference>
<evidence type="ECO:0000250" key="1"/>
<evidence type="ECO:0000255" key="2"/>
<evidence type="ECO:0000255" key="3">
    <source>
        <dbReference type="PROSITE-ProRule" id="PRU00289"/>
    </source>
</evidence>
<evidence type="ECO:0000305" key="4"/>